<feature type="chain" id="PRO_1000017579" description="Large ribosomal subunit protein bL27">
    <location>
        <begin position="1"/>
        <end position="90"/>
    </location>
</feature>
<gene>
    <name evidence="1" type="primary">rpmA</name>
    <name type="ordered locus">RPD_0588</name>
</gene>
<reference key="1">
    <citation type="submission" date="2006-03" db="EMBL/GenBank/DDBJ databases">
        <title>Complete sequence of Rhodopseudomonas palustris BisB5.</title>
        <authorList>
            <consortium name="US DOE Joint Genome Institute"/>
            <person name="Copeland A."/>
            <person name="Lucas S."/>
            <person name="Lapidus A."/>
            <person name="Barry K."/>
            <person name="Detter J.C."/>
            <person name="Glavina del Rio T."/>
            <person name="Hammon N."/>
            <person name="Israni S."/>
            <person name="Dalin E."/>
            <person name="Tice H."/>
            <person name="Pitluck S."/>
            <person name="Chain P."/>
            <person name="Malfatti S."/>
            <person name="Shin M."/>
            <person name="Vergez L."/>
            <person name="Schmutz J."/>
            <person name="Larimer F."/>
            <person name="Land M."/>
            <person name="Hauser L."/>
            <person name="Pelletier D.A."/>
            <person name="Kyrpides N."/>
            <person name="Lykidis A."/>
            <person name="Oda Y."/>
            <person name="Harwood C.S."/>
            <person name="Richardson P."/>
        </authorList>
    </citation>
    <scope>NUCLEOTIDE SEQUENCE [LARGE SCALE GENOMIC DNA]</scope>
    <source>
        <strain>BisB5</strain>
    </source>
</reference>
<comment type="similarity">
    <text evidence="1">Belongs to the bacterial ribosomal protein bL27 family.</text>
</comment>
<organism>
    <name type="scientific">Rhodopseudomonas palustris (strain BisB5)</name>
    <dbReference type="NCBI Taxonomy" id="316057"/>
    <lineage>
        <taxon>Bacteria</taxon>
        <taxon>Pseudomonadati</taxon>
        <taxon>Pseudomonadota</taxon>
        <taxon>Alphaproteobacteria</taxon>
        <taxon>Hyphomicrobiales</taxon>
        <taxon>Nitrobacteraceae</taxon>
        <taxon>Rhodopseudomonas</taxon>
    </lineage>
</organism>
<keyword id="KW-0687">Ribonucleoprotein</keyword>
<keyword id="KW-0689">Ribosomal protein</keyword>
<proteinExistence type="inferred from homology"/>
<accession>Q13DL3</accession>
<dbReference type="EMBL" id="CP000283">
    <property type="protein sequence ID" value="ABE37826.1"/>
    <property type="molecule type" value="Genomic_DNA"/>
</dbReference>
<dbReference type="SMR" id="Q13DL3"/>
<dbReference type="STRING" id="316057.RPD_0588"/>
<dbReference type="KEGG" id="rpd:RPD_0588"/>
<dbReference type="eggNOG" id="COG0211">
    <property type="taxonomic scope" value="Bacteria"/>
</dbReference>
<dbReference type="HOGENOM" id="CLU_095424_4_1_5"/>
<dbReference type="BioCyc" id="RPAL316057:RPD_RS03015-MONOMER"/>
<dbReference type="Proteomes" id="UP000001818">
    <property type="component" value="Chromosome"/>
</dbReference>
<dbReference type="GO" id="GO:0022625">
    <property type="term" value="C:cytosolic large ribosomal subunit"/>
    <property type="evidence" value="ECO:0007669"/>
    <property type="project" value="TreeGrafter"/>
</dbReference>
<dbReference type="GO" id="GO:0003735">
    <property type="term" value="F:structural constituent of ribosome"/>
    <property type="evidence" value="ECO:0007669"/>
    <property type="project" value="InterPro"/>
</dbReference>
<dbReference type="GO" id="GO:0006412">
    <property type="term" value="P:translation"/>
    <property type="evidence" value="ECO:0007669"/>
    <property type="project" value="UniProtKB-UniRule"/>
</dbReference>
<dbReference type="FunFam" id="2.40.50.100:FF:000020">
    <property type="entry name" value="50S ribosomal protein L27"/>
    <property type="match status" value="1"/>
</dbReference>
<dbReference type="Gene3D" id="2.40.50.100">
    <property type="match status" value="1"/>
</dbReference>
<dbReference type="HAMAP" id="MF_00539">
    <property type="entry name" value="Ribosomal_bL27"/>
    <property type="match status" value="1"/>
</dbReference>
<dbReference type="InterPro" id="IPR001684">
    <property type="entry name" value="Ribosomal_bL27"/>
</dbReference>
<dbReference type="InterPro" id="IPR018261">
    <property type="entry name" value="Ribosomal_bL27_CS"/>
</dbReference>
<dbReference type="NCBIfam" id="TIGR00062">
    <property type="entry name" value="L27"/>
    <property type="match status" value="1"/>
</dbReference>
<dbReference type="PANTHER" id="PTHR15893:SF0">
    <property type="entry name" value="LARGE RIBOSOMAL SUBUNIT PROTEIN BL27M"/>
    <property type="match status" value="1"/>
</dbReference>
<dbReference type="PANTHER" id="PTHR15893">
    <property type="entry name" value="RIBOSOMAL PROTEIN L27"/>
    <property type="match status" value="1"/>
</dbReference>
<dbReference type="Pfam" id="PF01016">
    <property type="entry name" value="Ribosomal_L27"/>
    <property type="match status" value="1"/>
</dbReference>
<dbReference type="PRINTS" id="PR00063">
    <property type="entry name" value="RIBOSOMALL27"/>
</dbReference>
<dbReference type="SUPFAM" id="SSF110324">
    <property type="entry name" value="Ribosomal L27 protein-like"/>
    <property type="match status" value="1"/>
</dbReference>
<dbReference type="PROSITE" id="PS00831">
    <property type="entry name" value="RIBOSOMAL_L27"/>
    <property type="match status" value="1"/>
</dbReference>
<evidence type="ECO:0000255" key="1">
    <source>
        <dbReference type="HAMAP-Rule" id="MF_00539"/>
    </source>
</evidence>
<evidence type="ECO:0000305" key="2"/>
<protein>
    <recommendedName>
        <fullName evidence="1">Large ribosomal subunit protein bL27</fullName>
    </recommendedName>
    <alternativeName>
        <fullName evidence="2">50S ribosomal protein L27</fullName>
    </alternativeName>
</protein>
<name>RL27_RHOPS</name>
<sequence>MAHKKAGGSSRNGRDSAGKRLGIKAYGGEYVIPGNIIARQRGTTWHPGLNVGMGTDHTLFAKVEGRVEFRAKANGRTFVSVLPIAAEAAE</sequence>